<organismHost>
    <name type="scientific">Aves</name>
    <dbReference type="NCBI Taxonomy" id="8782"/>
</organismHost>
<organismHost>
    <name type="scientific">Cetacea</name>
    <name type="common">whales</name>
    <dbReference type="NCBI Taxonomy" id="9721"/>
</organismHost>
<organismHost>
    <name type="scientific">Homo sapiens</name>
    <name type="common">Human</name>
    <dbReference type="NCBI Taxonomy" id="9606"/>
</organismHost>
<organismHost>
    <name type="scientific">Phocidae</name>
    <name type="common">true seals</name>
    <dbReference type="NCBI Taxonomy" id="9709"/>
</organismHost>
<organismHost>
    <name type="scientific">Sus scrofa</name>
    <name type="common">Pig</name>
    <dbReference type="NCBI Taxonomy" id="9823"/>
</organismHost>
<accession>P0DOF7</accession>
<accession>P03486</accession>
<accession>P10919</accession>
<accession>P63233</accession>
<accession>Q1K9D7</accession>
<evidence type="ECO:0000255" key="1">
    <source>
        <dbReference type="HAMAP-Rule" id="MF_04068"/>
    </source>
</evidence>
<evidence type="ECO:0000269" key="2">
    <source>
    </source>
</evidence>
<evidence type="ECO:0000269" key="3">
    <source>
    </source>
</evidence>
<sequence>MSLLTEVETYVLSIVPSGPLKAEIAQRLEDVFAGKNTDLEALMEWLKTRPILSPLTKGILGFVFTLTVPSERGLQRRRFVQNALNGNGDPNNMDRAVKLYRKLKREITFHGAKEIALSYSAGALASCMGLIYNRMGAVTTEVAFGLVCATCEQIADSQHRSHRQMVATTNPLIRHENRMVLASTTAKAMEQMAGSSEQAAEAMEVASQARQMVQAMRAIGTHPSSSAGLKDDLLENLQAYQKRMGVQMQRFK</sequence>
<organism>
    <name type="scientific">Influenza A virus (strain A/Udorn/1972 H3N2)</name>
    <dbReference type="NCBI Taxonomy" id="385599"/>
    <lineage>
        <taxon>Viruses</taxon>
        <taxon>Riboviria</taxon>
        <taxon>Orthornavirae</taxon>
        <taxon>Negarnaviricota</taxon>
        <taxon>Polyploviricotina</taxon>
        <taxon>Insthoviricetes</taxon>
        <taxon>Articulavirales</taxon>
        <taxon>Orthomyxoviridae</taxon>
        <taxon>Alphainfluenzavirus</taxon>
        <taxon>Alphainfluenzavirus influenzae</taxon>
        <taxon>Influenza A virus</taxon>
    </lineage>
</organism>
<comment type="function">
    <text evidence="1 3">Plays critical roles in virus replication, from virus entry and uncoating to assembly and budding of the virus particle. M1 binding to ribonucleocapsids (RNPs) in nucleus seems to inhibit viral transcription. Interaction of viral NEP with M1-RNP is thought to promote nuclear export of the complex, which is targeted to the virion assembly site at the apical plasma membrane in polarized epithelial cells. Interactions with NA and HA may bring M1, a non-raft-associated protein, into lipid rafts. Forms a continuous shell on the inner side of the lipid bilayer in virion, where it binds the RNP. During virus entry into cell, the M2 ion channel acidifies the internal virion core, inducing M1 dissociation from the RNP. M1-free RNPs are transported to the nucleus, where viral transcription and replication can take place.</text>
</comment>
<comment type="function">
    <text evidence="1 3">Determines the virion's shape: spherical or filamentous. Clinical isolates of influenza are characterized by the presence of significant proportion of filamentous virions, whereas after multiple passage on eggs or cell culture, virions have only spherical morphology. Filamentous virions are thought to be important to infect neighboring cells, and spherical virions more suited to spread through aerosol between hosts organisms.</text>
</comment>
<comment type="subunit">
    <text evidence="1">Homodimer and homomultimer. Interacts with NEP. Binds ribonucleocapsid by both interacting with genomic RNA and NP protein. May interact with HA and NA. Cannot bind NP without genomic RNA.</text>
</comment>
<comment type="subcellular location">
    <subcellularLocation>
        <location evidence="1">Virion membrane</location>
        <topology evidence="1">Peripheral membrane protein</topology>
        <orientation evidence="1">Cytoplasmic side</orientation>
    </subcellularLocation>
    <subcellularLocation>
        <location evidence="1">Host nucleus</location>
    </subcellularLocation>
</comment>
<comment type="alternative products">
    <event type="alternative splicing"/>
    <isoform>
        <id>P0DOF7-1</id>
        <id>P03486-1</id>
        <id>P63233-1</id>
        <name>M1</name>
        <sequence type="displayed"/>
    </isoform>
    <isoform>
        <id>P0DOF8-1</id>
        <id>P03490-1</id>
        <id>P63231-1</id>
        <name>M2</name>
        <sequence type="external"/>
    </isoform>
    <text>Only the first 9 residues are shared by the 2 isoforms.</text>
</comment>
<comment type="miscellaneous">
    <text evidence="1">Most abundant protein in virion. When expressed alone can form virus-like particles in transfected cells.</text>
</comment>
<comment type="similarity">
    <text evidence="1">Belongs to the influenza viruses Matrix protein M1 family.</text>
</comment>
<feature type="chain" id="PRO_0000078866" description="Matrix protein 1">
    <location>
        <begin position="1"/>
        <end position="252"/>
    </location>
</feature>
<feature type="region of interest" description="Membrane-binding" evidence="1">
    <location>
        <begin position="1"/>
        <end position="164"/>
    </location>
</feature>
<feature type="region of interest" description="RNP-binding" evidence="1">
    <location>
        <begin position="165"/>
        <end position="252"/>
    </location>
</feature>
<feature type="short sequence motif" description="Nuclear localization signal" evidence="1">
    <location>
        <begin position="101"/>
        <end position="105"/>
    </location>
</feature>
<feature type="mutagenesis site" description="No effect on filamentous virion particles morphology." evidence="2">
    <original>A</original>
    <variation>V</variation>
    <location>
        <position position="41"/>
    </location>
</feature>
<feature type="mutagenesis site" description="Complete loss of filamentous virion particles morphology." evidence="2">
    <original>R</original>
    <variation>K</variation>
    <location>
        <position position="95"/>
    </location>
</feature>
<feature type="mutagenesis site" description="No effect on filamentous virion particles morphology." evidence="2">
    <original>A</original>
    <variation>T</variation>
    <location>
        <position position="167"/>
    </location>
</feature>
<feature type="mutagenesis site" description="No effect on filamentous virion particles morphology." evidence="2">
    <original>T</original>
    <variation>A</variation>
    <location>
        <position position="168"/>
    </location>
</feature>
<feature type="mutagenesis site" description="Complete loss of filamentous virion particles morphology." evidence="2">
    <original>E</original>
    <variation>D</variation>
    <location>
        <position position="204"/>
    </location>
</feature>
<feature type="mutagenesis site" description="No effect on filamentous virion particles morphology." evidence="2">
    <original>V</original>
    <variation>I</variation>
    <location>
        <position position="205"/>
    </location>
</feature>
<feature type="mutagenesis site" description="No effect on filamentous virion particles morphology." evidence="2">
    <original>A</original>
    <variation>T</variation>
    <location>
        <position position="218"/>
    </location>
</feature>
<proteinExistence type="evidence at protein level"/>
<protein>
    <recommendedName>
        <fullName evidence="1">Matrix protein 1</fullName>
        <shortName evidence="1">M1</shortName>
    </recommendedName>
</protein>
<reference key="1">
    <citation type="journal article" date="1981" name="Virology">
        <title>Conservation of the influenza virus membrane protein (M1) amino acid sequence and an open reading frame of RNA segment 7 encoding a second protein (M2) in H1N1 and H3N2 strains.</title>
        <authorList>
            <person name="Lamb R.A."/>
            <person name="Lai C.-J."/>
        </authorList>
    </citation>
    <scope>NUCLEOTIDE SEQUENCE [GENOMIC RNA]</scope>
</reference>
<reference key="2">
    <citation type="journal article" date="1981" name="Proc. Natl. Acad. Sci. U.S.A.">
        <title>Sequences of mRNAs derived from genome RNA segment 7 of influenza virus: colinear and interrupted mRNAs code for overlapping proteins.</title>
        <authorList>
            <person name="Lamb R.A."/>
            <person name="Lai C.-J."/>
            <person name="Choppin P.W."/>
        </authorList>
    </citation>
    <scope>NUCLEOTIDE SEQUENCE [GENOMIC RNA] OF 1-13 AND 210-252</scope>
</reference>
<reference key="3">
    <citation type="journal article" date="2003" name="J. Gen. Virol.">
        <title>Reverse genetics studies on the filamentous morphology of influenza A virus.</title>
        <authorList>
            <person name="Bourmakina S.V."/>
            <person name="Garcia-Sastre A."/>
        </authorList>
    </citation>
    <scope>MUTAGENESIS OF ALA-41; ARG-95; ALA-167; THR-168; GLU-204; VAL-205 AND ALA-218</scope>
</reference>
<reference key="4">
    <citation type="journal article" date="2004" name="Virology">
        <title>The M1 matrix protein controls the filamentous phenotype of influenza A virus.</title>
        <authorList>
            <person name="Elleman C.J."/>
            <person name="Barclay W.S."/>
        </authorList>
    </citation>
    <scope>FUNCTION</scope>
</reference>
<dbReference type="EMBL" id="J02167">
    <property type="protein sequence ID" value="AAA43304.1"/>
    <property type="molecule type" value="Genomic_RNA"/>
</dbReference>
<dbReference type="PIR" id="A94326">
    <property type="entry name" value="MFIVC"/>
</dbReference>
<dbReference type="SMR" id="P0DOF7"/>
<dbReference type="Proteomes" id="UP000171580">
    <property type="component" value="Genome"/>
</dbReference>
<dbReference type="GO" id="GO:0042025">
    <property type="term" value="C:host cell nucleus"/>
    <property type="evidence" value="ECO:0007669"/>
    <property type="project" value="UniProtKB-SubCell"/>
</dbReference>
<dbReference type="GO" id="GO:0016020">
    <property type="term" value="C:membrane"/>
    <property type="evidence" value="ECO:0007669"/>
    <property type="project" value="UniProtKB-KW"/>
</dbReference>
<dbReference type="GO" id="GO:0055036">
    <property type="term" value="C:virion membrane"/>
    <property type="evidence" value="ECO:0007669"/>
    <property type="project" value="UniProtKB-SubCell"/>
</dbReference>
<dbReference type="GO" id="GO:0003723">
    <property type="term" value="F:RNA binding"/>
    <property type="evidence" value="ECO:0007669"/>
    <property type="project" value="UniProtKB-UniRule"/>
</dbReference>
<dbReference type="GO" id="GO:0039660">
    <property type="term" value="F:structural constituent of virion"/>
    <property type="evidence" value="ECO:0007669"/>
    <property type="project" value="UniProtKB-UniRule"/>
</dbReference>
<dbReference type="GO" id="GO:0046761">
    <property type="term" value="P:viral budding from plasma membrane"/>
    <property type="evidence" value="ECO:0007669"/>
    <property type="project" value="UniProtKB-UniRule"/>
</dbReference>
<dbReference type="FunFam" id="1.10.10.180:FF:000001">
    <property type="entry name" value="Matrix protein 1"/>
    <property type="match status" value="1"/>
</dbReference>
<dbReference type="FunFam" id="1.20.91.10:FF:000001">
    <property type="entry name" value="Matrix protein 1"/>
    <property type="match status" value="1"/>
</dbReference>
<dbReference type="Gene3D" id="1.10.10.180">
    <property type="match status" value="1"/>
</dbReference>
<dbReference type="Gene3D" id="1.20.91.10">
    <property type="match status" value="1"/>
</dbReference>
<dbReference type="HAMAP" id="MF_04068">
    <property type="entry name" value="INFV_M1"/>
    <property type="match status" value="1"/>
</dbReference>
<dbReference type="InterPro" id="IPR036039">
    <property type="entry name" value="Flu_matrix_M1"/>
</dbReference>
<dbReference type="InterPro" id="IPR013188">
    <property type="entry name" value="Flu_matrix_M1_C"/>
</dbReference>
<dbReference type="InterPro" id="IPR001561">
    <property type="entry name" value="Flu_matrix_M1_N"/>
</dbReference>
<dbReference type="InterPro" id="IPR015423">
    <property type="entry name" value="Flu_matrix_M1_N_sub1"/>
</dbReference>
<dbReference type="InterPro" id="IPR015799">
    <property type="entry name" value="Flu_matrix_M1_N_sub2"/>
</dbReference>
<dbReference type="InterPro" id="IPR037533">
    <property type="entry name" value="INFV_M1"/>
</dbReference>
<dbReference type="Pfam" id="PF00598">
    <property type="entry name" value="Flu_M1"/>
    <property type="match status" value="1"/>
</dbReference>
<dbReference type="Pfam" id="PF08289">
    <property type="entry name" value="Flu_M1_C"/>
    <property type="match status" value="1"/>
</dbReference>
<dbReference type="SMART" id="SM00759">
    <property type="entry name" value="Flu_M1_C"/>
    <property type="match status" value="1"/>
</dbReference>
<dbReference type="SUPFAM" id="SSF48145">
    <property type="entry name" value="Influenza virus matrix protein M1"/>
    <property type="match status" value="1"/>
</dbReference>
<keyword id="KW-0025">Alternative splicing</keyword>
<keyword id="KW-1048">Host nucleus</keyword>
<keyword id="KW-0472">Membrane</keyword>
<keyword id="KW-0694">RNA-binding</keyword>
<keyword id="KW-0468">Viral matrix protein</keyword>
<keyword id="KW-0946">Virion</keyword>
<name>M1_I72A8</name>
<gene>
    <name evidence="1" type="primary">M</name>
</gene>